<keyword id="KW-0217">Developmental protein</keyword>
<keyword id="KW-1015">Disulfide bond</keyword>
<keyword id="KW-0272">Extracellular matrix</keyword>
<keyword id="KW-0325">Glycoprotein</keyword>
<keyword id="KW-0449">Lipoprotein</keyword>
<keyword id="KW-1185">Reference proteome</keyword>
<keyword id="KW-0964">Secreted</keyword>
<keyword id="KW-0732">Signal</keyword>
<keyword id="KW-0879">Wnt signaling pathway</keyword>
<sequence>MNFLPNGICFYLSVAICWFSSRVDASWWYMGTLGSQVMCDNIPGLINKQRQLCRQHPKVMQAIGAGIKNWIGECQHQFRTHRWNCNTMAREHNLFGRLLHRSSREAAFVYAISSAGMVYTLTRACSQGELENCSCDPGKKGSSRDAKGAFDWGGCSDHVDHAIKFTQVFIDAKERKERDARALMNLHNNRAGRKAVKRFMNLECKCHGVSGSCNVRTCWLAMADFRQTGDYLRKKYNNAIQVVMNQYGTGFTSAYRMLKRPNKNDLVYFEDSPDYCIWDHESGSVGTGGRVCNRTSRGTDSCEVMCCGRGYDTSRVSRTTKCECKFQWCCAVHCRDCQEEVDVHTCKTQS</sequence>
<protein>
    <recommendedName>
        <fullName>Protein Wnt-2</fullName>
    </recommendedName>
</protein>
<dbReference type="EMBL" id="U51266">
    <property type="protein sequence ID" value="AAA96517.1"/>
    <property type="molecule type" value="mRNA"/>
</dbReference>
<dbReference type="EMBL" id="BC056277">
    <property type="protein sequence ID" value="AAH56277.1"/>
    <property type="molecule type" value="mRNA"/>
</dbReference>
<dbReference type="RefSeq" id="NP_571025.1">
    <property type="nucleotide sequence ID" value="NM_130950.1"/>
</dbReference>
<dbReference type="SMR" id="Q92048"/>
<dbReference type="FunCoup" id="Q92048">
    <property type="interactions" value="207"/>
</dbReference>
<dbReference type="STRING" id="7955.ENSDARP00000060258"/>
<dbReference type="GlyCosmos" id="Q92048">
    <property type="glycosylation" value="2 sites, No reported glycans"/>
</dbReference>
<dbReference type="PaxDb" id="7955-ENSDARP00000060258"/>
<dbReference type="Ensembl" id="ENSDART00000060259">
    <property type="protein sequence ID" value="ENSDARP00000060258"/>
    <property type="gene ID" value="ENSDARG00000041117"/>
</dbReference>
<dbReference type="Ensembl" id="ENSDART00000187460">
    <property type="protein sequence ID" value="ENSDARP00000154555"/>
    <property type="gene ID" value="ENSDARG00000115436"/>
</dbReference>
<dbReference type="GeneID" id="30127"/>
<dbReference type="KEGG" id="dre:30127"/>
<dbReference type="AGR" id="ZFIN:ZDB-GENE-980526-416"/>
<dbReference type="CTD" id="7472"/>
<dbReference type="ZFIN" id="ZDB-GENE-980526-416">
    <property type="gene designation" value="wnt2"/>
</dbReference>
<dbReference type="eggNOG" id="KOG3913">
    <property type="taxonomic scope" value="Eukaryota"/>
</dbReference>
<dbReference type="HOGENOM" id="CLU_033039_1_4_1"/>
<dbReference type="InParanoid" id="Q92048"/>
<dbReference type="OMA" id="DSSWWYM"/>
<dbReference type="OrthoDB" id="5945655at2759"/>
<dbReference type="PhylomeDB" id="Q92048"/>
<dbReference type="TreeFam" id="TF105310"/>
<dbReference type="Reactome" id="R-DRE-3238698">
    <property type="pathway name" value="WNT ligand biogenesis and trafficking"/>
</dbReference>
<dbReference type="PRO" id="PR:Q92048"/>
<dbReference type="Proteomes" id="UP000000437">
    <property type="component" value="Alternate scaffold 18"/>
</dbReference>
<dbReference type="Proteomes" id="UP000000437">
    <property type="component" value="Chromosome 18"/>
</dbReference>
<dbReference type="Bgee" id="ENSDARG00000041117">
    <property type="expression patterns" value="Expressed in pharyngeal gill and 6 other cell types or tissues"/>
</dbReference>
<dbReference type="GO" id="GO:0005615">
    <property type="term" value="C:extracellular space"/>
    <property type="evidence" value="ECO:0000318"/>
    <property type="project" value="GO_Central"/>
</dbReference>
<dbReference type="GO" id="GO:0005125">
    <property type="term" value="F:cytokine activity"/>
    <property type="evidence" value="ECO:0000318"/>
    <property type="project" value="GO_Central"/>
</dbReference>
<dbReference type="GO" id="GO:0005109">
    <property type="term" value="F:frizzled binding"/>
    <property type="evidence" value="ECO:0000318"/>
    <property type="project" value="GO_Central"/>
</dbReference>
<dbReference type="GO" id="GO:0060070">
    <property type="term" value="P:canonical Wnt signaling pathway"/>
    <property type="evidence" value="ECO:0000318"/>
    <property type="project" value="GO_Central"/>
</dbReference>
<dbReference type="GO" id="GO:0045165">
    <property type="term" value="P:cell fate commitment"/>
    <property type="evidence" value="ECO:0000318"/>
    <property type="project" value="GO_Central"/>
</dbReference>
<dbReference type="GO" id="GO:0042074">
    <property type="term" value="P:cell migration involved in gastrulation"/>
    <property type="evidence" value="ECO:0000250"/>
    <property type="project" value="UniProtKB"/>
</dbReference>
<dbReference type="GO" id="GO:0072574">
    <property type="term" value="P:hepatocyte proliferation"/>
    <property type="evidence" value="ECO:0000315"/>
    <property type="project" value="ZFIN"/>
</dbReference>
<dbReference type="GO" id="GO:0001889">
    <property type="term" value="P:liver development"/>
    <property type="evidence" value="ECO:0000315"/>
    <property type="project" value="ZFIN"/>
</dbReference>
<dbReference type="GO" id="GO:0030182">
    <property type="term" value="P:neuron differentiation"/>
    <property type="evidence" value="ECO:0000318"/>
    <property type="project" value="GO_Central"/>
</dbReference>
<dbReference type="GO" id="GO:0048794">
    <property type="term" value="P:swim bladder development"/>
    <property type="evidence" value="ECO:0000315"/>
    <property type="project" value="ZFIN"/>
</dbReference>
<dbReference type="FunFam" id="3.30.2460.20:FF:000001">
    <property type="entry name" value="Wnt homolog"/>
    <property type="match status" value="1"/>
</dbReference>
<dbReference type="Gene3D" id="3.30.2460.20">
    <property type="match status" value="1"/>
</dbReference>
<dbReference type="InterPro" id="IPR005817">
    <property type="entry name" value="Wnt"/>
</dbReference>
<dbReference type="InterPro" id="IPR009140">
    <property type="entry name" value="Wnt2"/>
</dbReference>
<dbReference type="InterPro" id="IPR043158">
    <property type="entry name" value="Wnt_C"/>
</dbReference>
<dbReference type="InterPro" id="IPR018161">
    <property type="entry name" value="Wnt_CS"/>
</dbReference>
<dbReference type="PANTHER" id="PTHR12027:SF86">
    <property type="entry name" value="PROTEIN WNT-2"/>
    <property type="match status" value="1"/>
</dbReference>
<dbReference type="PANTHER" id="PTHR12027">
    <property type="entry name" value="WNT RELATED"/>
    <property type="match status" value="1"/>
</dbReference>
<dbReference type="Pfam" id="PF00110">
    <property type="entry name" value="wnt"/>
    <property type="match status" value="1"/>
</dbReference>
<dbReference type="PRINTS" id="PR01842">
    <property type="entry name" value="WNT2PROTEIN"/>
</dbReference>
<dbReference type="PRINTS" id="PR01349">
    <property type="entry name" value="WNTPROTEIN"/>
</dbReference>
<dbReference type="SMART" id="SM00097">
    <property type="entry name" value="WNT1"/>
    <property type="match status" value="1"/>
</dbReference>
<dbReference type="PROSITE" id="PS00246">
    <property type="entry name" value="WNT1"/>
    <property type="match status" value="1"/>
</dbReference>
<proteinExistence type="evidence at transcript level"/>
<feature type="signal peptide" evidence="5">
    <location>
        <begin position="1"/>
        <end position="25"/>
    </location>
</feature>
<feature type="chain" id="PRO_0000041412" description="Protein Wnt-2">
    <location>
        <begin position="26"/>
        <end position="350"/>
    </location>
</feature>
<feature type="lipid moiety-binding region" description="O-palmitoleoyl serine; by PORCN" evidence="4">
    <location>
        <position position="210"/>
    </location>
</feature>
<feature type="glycosylation site" description="N-linked (GlcNAc...) asparagine" evidence="5">
    <location>
        <position position="132"/>
    </location>
</feature>
<feature type="glycosylation site" description="N-linked (GlcNAc...) asparagine" evidence="5">
    <location>
        <position position="293"/>
    </location>
</feature>
<feature type="disulfide bond" evidence="3">
    <location>
        <begin position="74"/>
        <end position="85"/>
    </location>
</feature>
<feature type="disulfide bond" evidence="3">
    <location>
        <begin position="125"/>
        <end position="133"/>
    </location>
</feature>
<feature type="disulfide bond" evidence="3">
    <location>
        <begin position="135"/>
        <end position="155"/>
    </location>
</feature>
<feature type="disulfide bond" evidence="3">
    <location>
        <begin position="204"/>
        <end position="218"/>
    </location>
</feature>
<feature type="disulfide bond" evidence="3">
    <location>
        <begin position="206"/>
        <end position="213"/>
    </location>
</feature>
<feature type="disulfide bond" evidence="3">
    <location>
        <begin position="276"/>
        <end position="307"/>
    </location>
</feature>
<feature type="disulfide bond" evidence="3">
    <location>
        <begin position="292"/>
        <end position="302"/>
    </location>
</feature>
<feature type="disulfide bond" evidence="3">
    <location>
        <begin position="306"/>
        <end position="346"/>
    </location>
</feature>
<feature type="disulfide bond" evidence="3">
    <location>
        <begin position="322"/>
        <end position="337"/>
    </location>
</feature>
<feature type="disulfide bond" evidence="3">
    <location>
        <begin position="324"/>
        <end position="334"/>
    </location>
</feature>
<feature type="disulfide bond" evidence="3">
    <location>
        <begin position="329"/>
        <end position="330"/>
    </location>
</feature>
<comment type="function">
    <text evidence="1 2">Ligand for members of the frizzled family of seven transmembrane receptors. Functions in the canonical Wnt signaling pathway that results in activation of transcription factors of the TCF/LEF family (By similarity).</text>
</comment>
<comment type="subcellular location">
    <subcellularLocation>
        <location evidence="1">Secreted</location>
        <location evidence="1">Extracellular space</location>
        <location evidence="1">Extracellular matrix</location>
    </subcellularLocation>
    <subcellularLocation>
        <location evidence="1">Secreted</location>
    </subcellularLocation>
</comment>
<comment type="developmental stage">
    <text evidence="6">First detected in the developing viscera at 30 hours. Expression is gone by 5 days.</text>
</comment>
<comment type="PTM">
    <text evidence="1">Palmitoleoylation is required for efficient binding to frizzled receptors. Depalmitoleoylation leads to Wnt signaling pathway inhibition.</text>
</comment>
<comment type="similarity">
    <text evidence="7">Belongs to the Wnt family.</text>
</comment>
<accession>Q92048</accession>
<gene>
    <name type="primary">wnt2</name>
    <name type="synonym">wnt-2</name>
</gene>
<organism>
    <name type="scientific">Danio rerio</name>
    <name type="common">Zebrafish</name>
    <name type="synonym">Brachydanio rerio</name>
    <dbReference type="NCBI Taxonomy" id="7955"/>
    <lineage>
        <taxon>Eukaryota</taxon>
        <taxon>Metazoa</taxon>
        <taxon>Chordata</taxon>
        <taxon>Craniata</taxon>
        <taxon>Vertebrata</taxon>
        <taxon>Euteleostomi</taxon>
        <taxon>Actinopterygii</taxon>
        <taxon>Neopterygii</taxon>
        <taxon>Teleostei</taxon>
        <taxon>Ostariophysi</taxon>
        <taxon>Cypriniformes</taxon>
        <taxon>Danionidae</taxon>
        <taxon>Danioninae</taxon>
        <taxon>Danio</taxon>
    </lineage>
</organism>
<name>WNT2_DANRE</name>
<evidence type="ECO:0000250" key="1">
    <source>
        <dbReference type="UniProtKB" id="P09544"/>
    </source>
</evidence>
<evidence type="ECO:0000250" key="2">
    <source>
        <dbReference type="UniProtKB" id="P21552"/>
    </source>
</evidence>
<evidence type="ECO:0000250" key="3">
    <source>
        <dbReference type="UniProtKB" id="P28026"/>
    </source>
</evidence>
<evidence type="ECO:0000250" key="4">
    <source>
        <dbReference type="UniProtKB" id="P56704"/>
    </source>
</evidence>
<evidence type="ECO:0000255" key="5"/>
<evidence type="ECO:0000269" key="6">
    <source ref="1"/>
</evidence>
<evidence type="ECO:0000305" key="7"/>
<reference key="1">
    <citation type="journal article" date="1996" name="Dev. Genes Evol.">
        <title>Three Wnt genes expressed in a wide variety of tissues during development of the zebrafish, Danio rerio: developmental and evolutionary perspectives.</title>
        <authorList>
            <person name="Blader P."/>
            <person name="Straehle U."/>
            <person name="Ingham P.W."/>
        </authorList>
    </citation>
    <scope>NUCLEOTIDE SEQUENCE [MRNA]</scope>
    <scope>DEVELOPMENTAL STAGE</scope>
    <source>
        <tissue>Embryo</tissue>
    </source>
</reference>
<reference key="2">
    <citation type="submission" date="2003-08" db="EMBL/GenBank/DDBJ databases">
        <authorList>
            <consortium name="NIH - Zebrafish Gene Collection (ZGC) project"/>
        </authorList>
    </citation>
    <scope>NUCLEOTIDE SEQUENCE [LARGE SCALE MRNA]</scope>
    <source>
        <tissue>Embryo</tissue>
    </source>
</reference>